<keyword id="KW-0150">Chloroplast</keyword>
<keyword id="KW-0934">Plastid</keyword>
<keyword id="KW-0687">Ribonucleoprotein</keyword>
<keyword id="KW-0689">Ribosomal protein</keyword>
<keyword id="KW-0694">RNA-binding</keyword>
<keyword id="KW-0699">rRNA-binding</keyword>
<evidence type="ECO:0000250" key="1"/>
<evidence type="ECO:0000305" key="2"/>
<name>RR3_SACOF</name>
<sequence length="224" mass="25916">MGQKINPLGFRLGTTQNHHSFWFAQPKNYSEGLQEDKKIRNCIKNYIQKNRKKGSNRKMESDSSSEVITHIEIQKEIDTIHVIIHIGFPNLLKKKGAIEELEKDLQKEVNSVNQRLNIAIEKVKEPYRQPNILAEYIAFQLKNRVSFRKAMKKAIELTKKADIKGIKIQIAGRLAGKEIARAECIKKGRLPLQTIRAKIDYCCYPIRTIYGVLGVKIWIFVEEE</sequence>
<dbReference type="EMBL" id="AP006714">
    <property type="protein sequence ID" value="BAD27331.1"/>
    <property type="molecule type" value="Genomic_DNA"/>
</dbReference>
<dbReference type="RefSeq" id="YP_009389609.1">
    <property type="nucleotide sequence ID" value="NC_035224.1"/>
</dbReference>
<dbReference type="SMR" id="Q6ENS5"/>
<dbReference type="GeneID" id="33347826"/>
<dbReference type="GO" id="GO:0009507">
    <property type="term" value="C:chloroplast"/>
    <property type="evidence" value="ECO:0007669"/>
    <property type="project" value="UniProtKB-SubCell"/>
</dbReference>
<dbReference type="GO" id="GO:0022627">
    <property type="term" value="C:cytosolic small ribosomal subunit"/>
    <property type="evidence" value="ECO:0007669"/>
    <property type="project" value="TreeGrafter"/>
</dbReference>
<dbReference type="GO" id="GO:0019843">
    <property type="term" value="F:rRNA binding"/>
    <property type="evidence" value="ECO:0007669"/>
    <property type="project" value="UniProtKB-KW"/>
</dbReference>
<dbReference type="GO" id="GO:0003735">
    <property type="term" value="F:structural constituent of ribosome"/>
    <property type="evidence" value="ECO:0007669"/>
    <property type="project" value="InterPro"/>
</dbReference>
<dbReference type="GO" id="GO:0006412">
    <property type="term" value="P:translation"/>
    <property type="evidence" value="ECO:0007669"/>
    <property type="project" value="UniProtKB-UniRule"/>
</dbReference>
<dbReference type="CDD" id="cd02412">
    <property type="entry name" value="KH-II_30S_S3"/>
    <property type="match status" value="1"/>
</dbReference>
<dbReference type="FunFam" id="3.30.1140.32:FF:000003">
    <property type="entry name" value="30S ribosomal protein S3, chloroplastic"/>
    <property type="match status" value="1"/>
</dbReference>
<dbReference type="FunFam" id="3.30.300.20:FF:000008">
    <property type="entry name" value="30S ribosomal protein S3, chloroplastic"/>
    <property type="match status" value="1"/>
</dbReference>
<dbReference type="Gene3D" id="3.30.300.20">
    <property type="match status" value="1"/>
</dbReference>
<dbReference type="Gene3D" id="3.30.1140.32">
    <property type="entry name" value="Ribosomal protein S3, C-terminal domain"/>
    <property type="match status" value="1"/>
</dbReference>
<dbReference type="HAMAP" id="MF_01309_B">
    <property type="entry name" value="Ribosomal_uS3_B"/>
    <property type="match status" value="1"/>
</dbReference>
<dbReference type="InterPro" id="IPR015946">
    <property type="entry name" value="KH_dom-like_a/b"/>
</dbReference>
<dbReference type="InterPro" id="IPR009019">
    <property type="entry name" value="KH_sf_prok-type"/>
</dbReference>
<dbReference type="InterPro" id="IPR036419">
    <property type="entry name" value="Ribosomal_S3_C_sf"/>
</dbReference>
<dbReference type="InterPro" id="IPR005704">
    <property type="entry name" value="Ribosomal_uS3_bac-typ"/>
</dbReference>
<dbReference type="InterPro" id="IPR001351">
    <property type="entry name" value="Ribosomal_uS3_C"/>
</dbReference>
<dbReference type="InterPro" id="IPR018280">
    <property type="entry name" value="Ribosomal_uS3_CS"/>
</dbReference>
<dbReference type="NCBIfam" id="TIGR01009">
    <property type="entry name" value="rpsC_bact"/>
    <property type="match status" value="1"/>
</dbReference>
<dbReference type="PANTHER" id="PTHR11760">
    <property type="entry name" value="30S/40S RIBOSOMAL PROTEIN S3"/>
    <property type="match status" value="1"/>
</dbReference>
<dbReference type="PANTHER" id="PTHR11760:SF42">
    <property type="entry name" value="SMALL RIBOSOMAL SUBUNIT PROTEIN US3C"/>
    <property type="match status" value="1"/>
</dbReference>
<dbReference type="Pfam" id="PF00189">
    <property type="entry name" value="Ribosomal_S3_C"/>
    <property type="match status" value="1"/>
</dbReference>
<dbReference type="SUPFAM" id="SSF54814">
    <property type="entry name" value="Prokaryotic type KH domain (KH-domain type II)"/>
    <property type="match status" value="1"/>
</dbReference>
<dbReference type="SUPFAM" id="SSF54821">
    <property type="entry name" value="Ribosomal protein S3 C-terminal domain"/>
    <property type="match status" value="1"/>
</dbReference>
<dbReference type="PROSITE" id="PS00548">
    <property type="entry name" value="RIBOSOMAL_S3"/>
    <property type="match status" value="1"/>
</dbReference>
<geneLocation type="chloroplast"/>
<proteinExistence type="inferred from homology"/>
<comment type="subunit">
    <text evidence="1">Part of the 30S ribosomal subunit.</text>
</comment>
<comment type="subcellular location">
    <subcellularLocation>
        <location>Plastid</location>
        <location>Chloroplast</location>
    </subcellularLocation>
</comment>
<comment type="similarity">
    <text evidence="2">Belongs to the universal ribosomal protein uS3 family.</text>
</comment>
<reference key="1">
    <citation type="journal article" date="2004" name="DNA Res.">
        <title>Complete nucleotide sequence of the sugarcane (Saccharum officinarum) chloroplast genome: a comparative analysis of four monocot chloroplast genomes.</title>
        <authorList>
            <person name="Asano T."/>
            <person name="Tsudzuki T."/>
            <person name="Takahashi S."/>
            <person name="Shimada H."/>
            <person name="Kadowaki K."/>
        </authorList>
    </citation>
    <scope>NUCLEOTIDE SEQUENCE [LARGE SCALE GENOMIC DNA]</scope>
</reference>
<accession>Q6ENS5</accession>
<feature type="chain" id="PRO_0000130305" description="Small ribosomal subunit protein uS3c">
    <location>
        <begin position="1"/>
        <end position="224"/>
    </location>
</feature>
<feature type="domain" description="KH type-2">
    <location>
        <begin position="43"/>
        <end position="124"/>
    </location>
</feature>
<protein>
    <recommendedName>
        <fullName evidence="2">Small ribosomal subunit protein uS3c</fullName>
    </recommendedName>
    <alternativeName>
        <fullName>30S ribosomal protein S3, chloroplastic</fullName>
    </alternativeName>
</protein>
<organism>
    <name type="scientific">Saccharum officinarum</name>
    <name type="common">Sugarcane</name>
    <dbReference type="NCBI Taxonomy" id="4547"/>
    <lineage>
        <taxon>Eukaryota</taxon>
        <taxon>Viridiplantae</taxon>
        <taxon>Streptophyta</taxon>
        <taxon>Embryophyta</taxon>
        <taxon>Tracheophyta</taxon>
        <taxon>Spermatophyta</taxon>
        <taxon>Magnoliopsida</taxon>
        <taxon>Liliopsida</taxon>
        <taxon>Poales</taxon>
        <taxon>Poaceae</taxon>
        <taxon>PACMAD clade</taxon>
        <taxon>Panicoideae</taxon>
        <taxon>Andropogonodae</taxon>
        <taxon>Andropogoneae</taxon>
        <taxon>Saccharinae</taxon>
        <taxon>Saccharum</taxon>
        <taxon>Saccharum officinarum species complex</taxon>
    </lineage>
</organism>
<gene>
    <name type="primary">rps3</name>
</gene>